<name>Y236_CAMJE</name>
<gene>
    <name type="ordered locus">Cj0236c</name>
</gene>
<dbReference type="EMBL" id="AL111168">
    <property type="protein sequence ID" value="CAL34391.1"/>
    <property type="molecule type" value="Genomic_DNA"/>
</dbReference>
<dbReference type="PIR" id="D81441">
    <property type="entry name" value="D81441"/>
</dbReference>
<dbReference type="RefSeq" id="WP_002851668.1">
    <property type="nucleotide sequence ID" value="NZ_SZUC01000006.1"/>
</dbReference>
<dbReference type="RefSeq" id="YP_002343679.1">
    <property type="nucleotide sequence ID" value="NC_002163.1"/>
</dbReference>
<dbReference type="SMR" id="Q9PIQ8"/>
<dbReference type="STRING" id="192222.Cj0236c"/>
<dbReference type="PaxDb" id="192222-Cj0236c"/>
<dbReference type="EnsemblBacteria" id="CAL34391">
    <property type="protein sequence ID" value="CAL34391"/>
    <property type="gene ID" value="Cj0236c"/>
</dbReference>
<dbReference type="GeneID" id="904563"/>
<dbReference type="KEGG" id="cje:Cj0236c"/>
<dbReference type="PATRIC" id="fig|192222.6.peg.230"/>
<dbReference type="eggNOG" id="COG0670">
    <property type="taxonomic scope" value="Bacteria"/>
</dbReference>
<dbReference type="HOGENOM" id="CLU_058671_2_0_7"/>
<dbReference type="OrthoDB" id="9793828at2"/>
<dbReference type="Proteomes" id="UP000000799">
    <property type="component" value="Chromosome"/>
</dbReference>
<dbReference type="GO" id="GO:0005886">
    <property type="term" value="C:plasma membrane"/>
    <property type="evidence" value="ECO:0007669"/>
    <property type="project" value="UniProtKB-SubCell"/>
</dbReference>
<dbReference type="CDD" id="cd10432">
    <property type="entry name" value="BI-1-like_bacterial"/>
    <property type="match status" value="1"/>
</dbReference>
<dbReference type="InterPro" id="IPR006214">
    <property type="entry name" value="Bax_inhibitor_1-related"/>
</dbReference>
<dbReference type="PANTHER" id="PTHR23291">
    <property type="entry name" value="BAX INHIBITOR-RELATED"/>
    <property type="match status" value="1"/>
</dbReference>
<dbReference type="PANTHER" id="PTHR23291:SF115">
    <property type="entry name" value="MODULATOR OF FTSH PROTEASE YCCA"/>
    <property type="match status" value="1"/>
</dbReference>
<dbReference type="Pfam" id="PF01027">
    <property type="entry name" value="Bax1-I"/>
    <property type="match status" value="1"/>
</dbReference>
<protein>
    <recommendedName>
        <fullName>Uncharacterized protein Cj0236c</fullName>
    </recommendedName>
</protein>
<accession>Q9PIQ8</accession>
<accession>Q0PBR8</accession>
<keyword id="KW-1003">Cell membrane</keyword>
<keyword id="KW-0472">Membrane</keyword>
<keyword id="KW-1185">Reference proteome</keyword>
<keyword id="KW-0812">Transmembrane</keyword>
<keyword id="KW-1133">Transmembrane helix</keyword>
<evidence type="ECO:0000255" key="1"/>
<evidence type="ECO:0000305" key="2"/>
<comment type="subcellular location">
    <subcellularLocation>
        <location evidence="2">Cell membrane</location>
        <topology evidence="2">Multi-pass membrane protein</topology>
    </subcellularLocation>
</comment>
<comment type="similarity">
    <text evidence="2">Belongs to the BI1 family.</text>
</comment>
<proteinExistence type="inferred from homology"/>
<organism>
    <name type="scientific">Campylobacter jejuni subsp. jejuni serotype O:2 (strain ATCC 700819 / NCTC 11168)</name>
    <dbReference type="NCBI Taxonomy" id="192222"/>
    <lineage>
        <taxon>Bacteria</taxon>
        <taxon>Pseudomonadati</taxon>
        <taxon>Campylobacterota</taxon>
        <taxon>Epsilonproteobacteria</taxon>
        <taxon>Campylobacterales</taxon>
        <taxon>Campylobacteraceae</taxon>
        <taxon>Campylobacter</taxon>
    </lineage>
</organism>
<reference key="1">
    <citation type="journal article" date="2000" name="Nature">
        <title>The genome sequence of the food-borne pathogen Campylobacter jejuni reveals hypervariable sequences.</title>
        <authorList>
            <person name="Parkhill J."/>
            <person name="Wren B.W."/>
            <person name="Mungall K.L."/>
            <person name="Ketley J.M."/>
            <person name="Churcher C.M."/>
            <person name="Basham D."/>
            <person name="Chillingworth T."/>
            <person name="Davies R.M."/>
            <person name="Feltwell T."/>
            <person name="Holroyd S."/>
            <person name="Jagels K."/>
            <person name="Karlyshev A.V."/>
            <person name="Moule S."/>
            <person name="Pallen M.J."/>
            <person name="Penn C.W."/>
            <person name="Quail M.A."/>
            <person name="Rajandream M.A."/>
            <person name="Rutherford K.M."/>
            <person name="van Vliet A.H.M."/>
            <person name="Whitehead S."/>
            <person name="Barrell B.G."/>
        </authorList>
    </citation>
    <scope>NUCLEOTIDE SEQUENCE [LARGE SCALE GENOMIC DNA]</scope>
    <source>
        <strain>ATCC 700819 / NCTC 11168</strain>
    </source>
</reference>
<feature type="chain" id="PRO_0000179095" description="Uncharacterized protein Cj0236c">
    <location>
        <begin position="1"/>
        <end position="231"/>
    </location>
</feature>
<feature type="transmembrane region" description="Helical" evidence="1">
    <location>
        <begin position="36"/>
        <end position="56"/>
    </location>
</feature>
<feature type="transmembrane region" description="Helical" evidence="1">
    <location>
        <begin position="58"/>
        <end position="78"/>
    </location>
</feature>
<feature type="transmembrane region" description="Helical" evidence="1">
    <location>
        <begin position="83"/>
        <end position="103"/>
    </location>
</feature>
<feature type="transmembrane region" description="Helical" evidence="1">
    <location>
        <begin position="143"/>
        <end position="163"/>
    </location>
</feature>
<feature type="transmembrane region" description="Helical" evidence="1">
    <location>
        <begin position="170"/>
        <end position="190"/>
    </location>
</feature>
<sequence length="231" mass="25487">MSLYDRDYSRSKEFENTRSSELSIFIKQTYQLFAASLLAATVGAYVGIFALASFFIQSQVTFWILFAVEIGLLFALQWKKREAPLNLVLLFGFTFCSGLTLTPLLISVLALPAGGIIIAQAFALTTVAFAGLSVFAMNTKKDFTVMGKALFIVLIVIVAASLLNLFFQSSIVNLAISAVAAILFSFYILYDTQNIIRGNYETPIEGAVALYLDFVNLFVSLLNILRSFNSR</sequence>